<proteinExistence type="evidence at protein level"/>
<gene>
    <name type="primary">RPL41</name>
</gene>
<evidence type="ECO:0000256" key="1">
    <source>
        <dbReference type="SAM" id="MobiDB-lite"/>
    </source>
</evidence>
<evidence type="ECO:0000305" key="2"/>
<evidence type="ECO:0000305" key="3">
    <source ref="2"/>
</evidence>
<comment type="subunit">
    <text evidence="3">Component of the small ribosomal subunit (SSU) (Ref.2).</text>
</comment>
<comment type="miscellaneous">
    <text evidence="3">Initially thought to be part of the large ribosomal subunit. Crystal structures show eS32/eL41 to be a small ribosomal subunit forming a bridge at the interface of the 2 subunits.</text>
</comment>
<comment type="similarity">
    <text evidence="2">Belongs to the eukaryotic ribosomal protein eS32 family.</text>
</comment>
<sequence>MRAKWKKKRMRRLKRKRRKMRQRSK</sequence>
<dbReference type="EMBL" id="X75423">
    <property type="protein sequence ID" value="CAA53175.1"/>
    <property type="molecule type" value="mRNA"/>
</dbReference>
<dbReference type="PIR" id="S38425">
    <property type="entry name" value="S38425"/>
</dbReference>
<dbReference type="SMR" id="P62122"/>
<dbReference type="PaxDb" id="3635-P62122"/>
<dbReference type="Proteomes" id="UP000189702">
    <property type="component" value="Unplaced"/>
</dbReference>
<dbReference type="GO" id="GO:1990904">
    <property type="term" value="C:ribonucleoprotein complex"/>
    <property type="evidence" value="ECO:0007669"/>
    <property type="project" value="UniProtKB-KW"/>
</dbReference>
<dbReference type="GO" id="GO:0005840">
    <property type="term" value="C:ribosome"/>
    <property type="evidence" value="ECO:0007669"/>
    <property type="project" value="UniProtKB-KW"/>
</dbReference>
<dbReference type="GO" id="GO:0003735">
    <property type="term" value="F:structural constituent of ribosome"/>
    <property type="evidence" value="ECO:0007669"/>
    <property type="project" value="InterPro"/>
</dbReference>
<dbReference type="GO" id="GO:0006412">
    <property type="term" value="P:translation"/>
    <property type="evidence" value="ECO:0007669"/>
    <property type="project" value="InterPro"/>
</dbReference>
<dbReference type="InterPro" id="IPR007836">
    <property type="entry name" value="Ribosomal_eS32"/>
</dbReference>
<dbReference type="Pfam" id="PF05162">
    <property type="entry name" value="Ribosomal_L41"/>
    <property type="match status" value="1"/>
</dbReference>
<reference key="1">
    <citation type="journal article" date="1994" name="Plant Physiol.">
        <title>Isolation and characterization of a cDNA encoding ribosomal protein L41 from cotton (Gossypium hirsutum L.).</title>
        <authorList>
            <person name="Turley R.B."/>
            <person name="Ferguson D.L."/>
            <person name="Meredith W.R."/>
        </authorList>
    </citation>
    <scope>NUCLEOTIDE SEQUENCE [MRNA]</scope>
    <source>
        <strain>cv. Deltapine 62</strain>
    </source>
</reference>
<reference key="2">
    <citation type="unpublished observations" date="2023-10">
        <authorList>
            <person name="Leibundgut M.A."/>
            <person name="Ban N."/>
        </authorList>
    </citation>
    <scope>REVISION OF SUBUNIT</scope>
    <scope>NOMENCLATURE</scope>
</reference>
<name>RS32_GOSHI</name>
<keyword id="KW-1185">Reference proteome</keyword>
<keyword id="KW-0687">Ribonucleoprotein</keyword>
<keyword id="KW-0689">Ribosomal protein</keyword>
<feature type="chain" id="PRO_0000198064" description="Small ribosomal subunit protein eS32">
    <location>
        <begin position="1"/>
        <end position="25"/>
    </location>
</feature>
<feature type="region of interest" description="Disordered" evidence="1">
    <location>
        <begin position="1"/>
        <end position="25"/>
    </location>
</feature>
<accession>P62122</accession>
<accession>P35015</accession>
<organism>
    <name type="scientific">Gossypium hirsutum</name>
    <name type="common">Upland cotton</name>
    <name type="synonym">Gossypium mexicanum</name>
    <dbReference type="NCBI Taxonomy" id="3635"/>
    <lineage>
        <taxon>Eukaryota</taxon>
        <taxon>Viridiplantae</taxon>
        <taxon>Streptophyta</taxon>
        <taxon>Embryophyta</taxon>
        <taxon>Tracheophyta</taxon>
        <taxon>Spermatophyta</taxon>
        <taxon>Magnoliopsida</taxon>
        <taxon>eudicotyledons</taxon>
        <taxon>Gunneridae</taxon>
        <taxon>Pentapetalae</taxon>
        <taxon>rosids</taxon>
        <taxon>malvids</taxon>
        <taxon>Malvales</taxon>
        <taxon>Malvaceae</taxon>
        <taxon>Malvoideae</taxon>
        <taxon>Gossypium</taxon>
    </lineage>
</organism>
<protein>
    <recommendedName>
        <fullName evidence="3">Small ribosomal subunit protein eS32</fullName>
    </recommendedName>
    <alternativeName>
        <fullName>60S ribosomal protein L41</fullName>
    </alternativeName>
    <alternativeName>
        <fullName evidence="2">Large ribosomal subunit protein eL41</fullName>
    </alternativeName>
</protein>